<gene>
    <name evidence="1" type="primary">rpoZ</name>
    <name type="ordered locus">TWT_362</name>
</gene>
<accession>Q820D5</accession>
<proteinExistence type="inferred from homology"/>
<name>RPOZ_TROWT</name>
<evidence type="ECO:0000255" key="1">
    <source>
        <dbReference type="HAMAP-Rule" id="MF_00366"/>
    </source>
</evidence>
<sequence>MENVNTFLEKVLYMEEDRGIADPPLDSLLSRSGSKYGLVIYAAKRARQIDQYYIDLHEGSFYAHVGPLVSVDADDKSLTVAMREIAEDKLDLKSSAAE</sequence>
<protein>
    <recommendedName>
        <fullName evidence="1">DNA-directed RNA polymerase subunit omega</fullName>
        <shortName evidence="1">RNAP omega subunit</shortName>
        <ecNumber evidence="1">2.7.7.6</ecNumber>
    </recommendedName>
    <alternativeName>
        <fullName evidence="1">RNA polymerase omega subunit</fullName>
    </alternativeName>
    <alternativeName>
        <fullName evidence="1">Transcriptase subunit omega</fullName>
    </alternativeName>
</protein>
<keyword id="KW-0240">DNA-directed RNA polymerase</keyword>
<keyword id="KW-0548">Nucleotidyltransferase</keyword>
<keyword id="KW-1185">Reference proteome</keyword>
<keyword id="KW-0804">Transcription</keyword>
<keyword id="KW-0808">Transferase</keyword>
<organism>
    <name type="scientific">Tropheryma whipplei (strain Twist)</name>
    <name type="common">Whipple's bacillus</name>
    <dbReference type="NCBI Taxonomy" id="203267"/>
    <lineage>
        <taxon>Bacteria</taxon>
        <taxon>Bacillati</taxon>
        <taxon>Actinomycetota</taxon>
        <taxon>Actinomycetes</taxon>
        <taxon>Micrococcales</taxon>
        <taxon>Tropherymataceae</taxon>
        <taxon>Tropheryma</taxon>
    </lineage>
</organism>
<reference key="1">
    <citation type="journal article" date="2003" name="Genome Res.">
        <title>Tropheryma whipplei twist: a human pathogenic Actinobacteria with a reduced genome.</title>
        <authorList>
            <person name="Raoult D."/>
            <person name="Ogata H."/>
            <person name="Audic S."/>
            <person name="Robert C."/>
            <person name="Suhre K."/>
            <person name="Drancourt M."/>
            <person name="Claverie J.-M."/>
        </authorList>
    </citation>
    <scope>NUCLEOTIDE SEQUENCE [LARGE SCALE GENOMIC DNA]</scope>
    <source>
        <strain>Twist</strain>
    </source>
</reference>
<comment type="function">
    <text evidence="1">Promotes RNA polymerase assembly. Latches the N- and C-terminal regions of the beta' subunit thereby facilitating its interaction with the beta and alpha subunits.</text>
</comment>
<comment type="catalytic activity">
    <reaction evidence="1">
        <text>RNA(n) + a ribonucleoside 5'-triphosphate = RNA(n+1) + diphosphate</text>
        <dbReference type="Rhea" id="RHEA:21248"/>
        <dbReference type="Rhea" id="RHEA-COMP:14527"/>
        <dbReference type="Rhea" id="RHEA-COMP:17342"/>
        <dbReference type="ChEBI" id="CHEBI:33019"/>
        <dbReference type="ChEBI" id="CHEBI:61557"/>
        <dbReference type="ChEBI" id="CHEBI:140395"/>
        <dbReference type="EC" id="2.7.7.6"/>
    </reaction>
</comment>
<comment type="subunit">
    <text evidence="1">The RNAP catalytic core consists of 2 alpha, 1 beta, 1 beta' and 1 omega subunit. When a sigma factor is associated with the core the holoenzyme is formed, which can initiate transcription.</text>
</comment>
<comment type="similarity">
    <text evidence="1">Belongs to the RNA polymerase subunit omega family.</text>
</comment>
<dbReference type="EC" id="2.7.7.6" evidence="1"/>
<dbReference type="EMBL" id="AE014184">
    <property type="protein sequence ID" value="AAO44459.1"/>
    <property type="molecule type" value="Genomic_DNA"/>
</dbReference>
<dbReference type="SMR" id="Q820D5"/>
<dbReference type="STRING" id="203267.TWT_362"/>
<dbReference type="KEGG" id="twh:TWT_362"/>
<dbReference type="eggNOG" id="COG1758">
    <property type="taxonomic scope" value="Bacteria"/>
</dbReference>
<dbReference type="HOGENOM" id="CLU_125406_1_1_11"/>
<dbReference type="Proteomes" id="UP000002200">
    <property type="component" value="Chromosome"/>
</dbReference>
<dbReference type="GO" id="GO:0000428">
    <property type="term" value="C:DNA-directed RNA polymerase complex"/>
    <property type="evidence" value="ECO:0007669"/>
    <property type="project" value="UniProtKB-KW"/>
</dbReference>
<dbReference type="GO" id="GO:0003677">
    <property type="term" value="F:DNA binding"/>
    <property type="evidence" value="ECO:0007669"/>
    <property type="project" value="UniProtKB-UniRule"/>
</dbReference>
<dbReference type="GO" id="GO:0003899">
    <property type="term" value="F:DNA-directed RNA polymerase activity"/>
    <property type="evidence" value="ECO:0007669"/>
    <property type="project" value="UniProtKB-UniRule"/>
</dbReference>
<dbReference type="GO" id="GO:0006351">
    <property type="term" value="P:DNA-templated transcription"/>
    <property type="evidence" value="ECO:0007669"/>
    <property type="project" value="UniProtKB-UniRule"/>
</dbReference>
<dbReference type="Gene3D" id="3.90.940.10">
    <property type="match status" value="1"/>
</dbReference>
<dbReference type="HAMAP" id="MF_00366">
    <property type="entry name" value="RNApol_bact_RpoZ"/>
    <property type="match status" value="1"/>
</dbReference>
<dbReference type="InterPro" id="IPR003716">
    <property type="entry name" value="DNA-dir_RNA_pol_omega"/>
</dbReference>
<dbReference type="InterPro" id="IPR006110">
    <property type="entry name" value="Pol_omega/Rpo6/RPB6"/>
</dbReference>
<dbReference type="InterPro" id="IPR036161">
    <property type="entry name" value="RPB6/omega-like_sf"/>
</dbReference>
<dbReference type="NCBIfam" id="TIGR00690">
    <property type="entry name" value="rpoZ"/>
    <property type="match status" value="1"/>
</dbReference>
<dbReference type="PANTHER" id="PTHR34476">
    <property type="entry name" value="DNA-DIRECTED RNA POLYMERASE SUBUNIT OMEGA"/>
    <property type="match status" value="1"/>
</dbReference>
<dbReference type="PANTHER" id="PTHR34476:SF1">
    <property type="entry name" value="DNA-DIRECTED RNA POLYMERASE SUBUNIT OMEGA"/>
    <property type="match status" value="1"/>
</dbReference>
<dbReference type="Pfam" id="PF01192">
    <property type="entry name" value="RNA_pol_Rpb6"/>
    <property type="match status" value="1"/>
</dbReference>
<dbReference type="SMART" id="SM01409">
    <property type="entry name" value="RNA_pol_Rpb6"/>
    <property type="match status" value="1"/>
</dbReference>
<dbReference type="SUPFAM" id="SSF63562">
    <property type="entry name" value="RPB6/omega subunit-like"/>
    <property type="match status" value="1"/>
</dbReference>
<feature type="chain" id="PRO_0000129007" description="DNA-directed RNA polymerase subunit omega">
    <location>
        <begin position="1"/>
        <end position="98"/>
    </location>
</feature>